<proteinExistence type="inferred from homology"/>
<reference key="1">
    <citation type="journal article" date="1993" name="J. Mol. Evol.">
        <title>Pathways of lysozyme evolution inferred from the sequences of cytochrome b in birds.</title>
        <authorList>
            <person name="Kornegay J.R."/>
            <person name="Kocher T.D."/>
            <person name="Williams L.A."/>
            <person name="Wilson A.C."/>
        </authorList>
    </citation>
    <scope>NUCLEOTIDE SEQUENCE [GENOMIC DNA]</scope>
    <source>
        <tissue>Liver</tissue>
    </source>
</reference>
<evidence type="ECO:0000250" key="1"/>
<evidence type="ECO:0000250" key="2">
    <source>
        <dbReference type="UniProtKB" id="P00157"/>
    </source>
</evidence>
<evidence type="ECO:0000255" key="3">
    <source>
        <dbReference type="PROSITE-ProRule" id="PRU00967"/>
    </source>
</evidence>
<evidence type="ECO:0000255" key="4">
    <source>
        <dbReference type="PROSITE-ProRule" id="PRU00968"/>
    </source>
</evidence>
<sequence>MAPNIRKSHPLLKMVNNSLIDLPTPSNISAWWNFGSLLAVCLVTQILTGLLLAMHYTADTTLAFSSVAHTCRNVQYGWLIRNLHANGASFFFICIFLHIGRGLYYGSYLYKETWNTGVILLLTLMATAFVGYVLPWGQMSFWGATVITNLFSAIPYIGQTLVEWAWGGFSVDNPTLTRFFALHFLLPFVIAGITIIHLTFLHESGSNNPLGISSNSDKIPFHPYYSIKDILGLTLMFIPFLTLALFSPNFLGDPENFTPANPLVTPPHIKPEWYFLFAYAILRSIPNKLGGVLALAASVLILLLIPFLHKSKQRTMTFRPLSQTLFWLLVANLLILTWIGSQPVEHPFIIIGQMASLSYFSILLILFPMIGTLENKILNY</sequence>
<keyword id="KW-0249">Electron transport</keyword>
<keyword id="KW-0349">Heme</keyword>
<keyword id="KW-0408">Iron</keyword>
<keyword id="KW-0472">Membrane</keyword>
<keyword id="KW-0479">Metal-binding</keyword>
<keyword id="KW-0496">Mitochondrion</keyword>
<keyword id="KW-0999">Mitochondrion inner membrane</keyword>
<keyword id="KW-0679">Respiratory chain</keyword>
<keyword id="KW-0812">Transmembrane</keyword>
<keyword id="KW-1133">Transmembrane helix</keyword>
<keyword id="KW-0813">Transport</keyword>
<keyword id="KW-0830">Ubiquinone</keyword>
<geneLocation type="mitochondrion"/>
<gene>
    <name type="primary">MT-CYB</name>
    <name type="synonym">COB</name>
    <name type="synonym">CYTB</name>
    <name type="synonym">MTCYB</name>
</gene>
<protein>
    <recommendedName>
        <fullName>Cytochrome b</fullName>
    </recommendedName>
    <alternativeName>
        <fullName>Complex III subunit 3</fullName>
    </alternativeName>
    <alternativeName>
        <fullName>Complex III subunit III</fullName>
    </alternativeName>
    <alternativeName>
        <fullName>Cytochrome b-c1 complex subunit 3</fullName>
    </alternativeName>
    <alternativeName>
        <fullName>Ubiquinol-cytochrome-c reductase complex cytochrome b subunit</fullName>
    </alternativeName>
</protein>
<dbReference type="EMBL" id="L08378">
    <property type="protein sequence ID" value="AAA18843.1"/>
    <property type="molecule type" value="Genomic_DNA"/>
</dbReference>
<dbReference type="SMR" id="P48885"/>
<dbReference type="GO" id="GO:0005743">
    <property type="term" value="C:mitochondrial inner membrane"/>
    <property type="evidence" value="ECO:0007669"/>
    <property type="project" value="UniProtKB-SubCell"/>
</dbReference>
<dbReference type="GO" id="GO:0045275">
    <property type="term" value="C:respiratory chain complex III"/>
    <property type="evidence" value="ECO:0007669"/>
    <property type="project" value="InterPro"/>
</dbReference>
<dbReference type="GO" id="GO:0046872">
    <property type="term" value="F:metal ion binding"/>
    <property type="evidence" value="ECO:0007669"/>
    <property type="project" value="UniProtKB-KW"/>
</dbReference>
<dbReference type="GO" id="GO:0008121">
    <property type="term" value="F:ubiquinol-cytochrome-c reductase activity"/>
    <property type="evidence" value="ECO:0007669"/>
    <property type="project" value="InterPro"/>
</dbReference>
<dbReference type="GO" id="GO:0006122">
    <property type="term" value="P:mitochondrial electron transport, ubiquinol to cytochrome c"/>
    <property type="evidence" value="ECO:0007669"/>
    <property type="project" value="TreeGrafter"/>
</dbReference>
<dbReference type="CDD" id="cd00290">
    <property type="entry name" value="cytochrome_b_C"/>
    <property type="match status" value="1"/>
</dbReference>
<dbReference type="CDD" id="cd00284">
    <property type="entry name" value="Cytochrome_b_N"/>
    <property type="match status" value="1"/>
</dbReference>
<dbReference type="FunFam" id="1.20.810.10:FF:000002">
    <property type="entry name" value="Cytochrome b"/>
    <property type="match status" value="1"/>
</dbReference>
<dbReference type="Gene3D" id="1.20.810.10">
    <property type="entry name" value="Cytochrome Bc1 Complex, Chain C"/>
    <property type="match status" value="1"/>
</dbReference>
<dbReference type="InterPro" id="IPR005798">
    <property type="entry name" value="Cyt_b/b6_C"/>
</dbReference>
<dbReference type="InterPro" id="IPR036150">
    <property type="entry name" value="Cyt_b/b6_C_sf"/>
</dbReference>
<dbReference type="InterPro" id="IPR005797">
    <property type="entry name" value="Cyt_b/b6_N"/>
</dbReference>
<dbReference type="InterPro" id="IPR027387">
    <property type="entry name" value="Cytb/b6-like_sf"/>
</dbReference>
<dbReference type="InterPro" id="IPR030689">
    <property type="entry name" value="Cytochrome_b"/>
</dbReference>
<dbReference type="InterPro" id="IPR048260">
    <property type="entry name" value="Cytochrome_b_C_euk/bac"/>
</dbReference>
<dbReference type="InterPro" id="IPR048259">
    <property type="entry name" value="Cytochrome_b_N_euk/bac"/>
</dbReference>
<dbReference type="InterPro" id="IPR016174">
    <property type="entry name" value="Di-haem_cyt_TM"/>
</dbReference>
<dbReference type="PANTHER" id="PTHR19271">
    <property type="entry name" value="CYTOCHROME B"/>
    <property type="match status" value="1"/>
</dbReference>
<dbReference type="PANTHER" id="PTHR19271:SF16">
    <property type="entry name" value="CYTOCHROME B"/>
    <property type="match status" value="1"/>
</dbReference>
<dbReference type="Pfam" id="PF00032">
    <property type="entry name" value="Cytochrom_B_C"/>
    <property type="match status" value="1"/>
</dbReference>
<dbReference type="Pfam" id="PF00033">
    <property type="entry name" value="Cytochrome_B"/>
    <property type="match status" value="1"/>
</dbReference>
<dbReference type="PIRSF" id="PIRSF038885">
    <property type="entry name" value="COB"/>
    <property type="match status" value="1"/>
</dbReference>
<dbReference type="SUPFAM" id="SSF81648">
    <property type="entry name" value="a domain/subunit of cytochrome bc1 complex (Ubiquinol-cytochrome c reductase)"/>
    <property type="match status" value="1"/>
</dbReference>
<dbReference type="SUPFAM" id="SSF81342">
    <property type="entry name" value="Transmembrane di-heme cytochromes"/>
    <property type="match status" value="1"/>
</dbReference>
<dbReference type="PROSITE" id="PS51003">
    <property type="entry name" value="CYTB_CTER"/>
    <property type="match status" value="1"/>
</dbReference>
<dbReference type="PROSITE" id="PS51002">
    <property type="entry name" value="CYTB_NTER"/>
    <property type="match status" value="1"/>
</dbReference>
<comment type="function">
    <text evidence="2">Component of the ubiquinol-cytochrome c reductase complex (complex III or cytochrome b-c1 complex) that is part of the mitochondrial respiratory chain. The b-c1 complex mediates electron transfer from ubiquinol to cytochrome c. Contributes to the generation of a proton gradient across the mitochondrial membrane that is then used for ATP synthesis.</text>
</comment>
<comment type="cofactor">
    <cofactor evidence="2">
        <name>heme b</name>
        <dbReference type="ChEBI" id="CHEBI:60344"/>
    </cofactor>
    <text evidence="2">Binds 2 heme b groups non-covalently.</text>
</comment>
<comment type="subunit">
    <text evidence="2">The cytochrome bc1 complex contains 11 subunits: 3 respiratory subunits (MT-CYB, CYC1 and UQCRFS1), 2 core proteins (UQCRC1 and UQCRC2) and 6 low-molecular weight proteins (UQCRH/QCR6, UQCRB/QCR7, UQCRQ/QCR8, UQCR10/QCR9, UQCR11/QCR10 and a cleavage product of UQCRFS1). This cytochrome bc1 complex then forms a dimer.</text>
</comment>
<comment type="subcellular location">
    <subcellularLocation>
        <location evidence="2">Mitochondrion inner membrane</location>
        <topology evidence="2">Multi-pass membrane protein</topology>
    </subcellularLocation>
</comment>
<comment type="miscellaneous">
    <text evidence="1">Heme 1 (or BL or b562) is low-potential and absorbs at about 562 nm, and heme 2 (or BH or b566) is high-potential and absorbs at about 566 nm.</text>
</comment>
<comment type="similarity">
    <text evidence="3 4">Belongs to the cytochrome b family.</text>
</comment>
<comment type="caution">
    <text evidence="2">The full-length protein contains only eight transmembrane helices, not nine as predicted by bioinformatics tools.</text>
</comment>
<organism>
    <name type="scientific">Alectoris chukar</name>
    <name type="common">Chukar partridge</name>
    <name type="synonym">Perdix chukar</name>
    <dbReference type="NCBI Taxonomy" id="9078"/>
    <lineage>
        <taxon>Eukaryota</taxon>
        <taxon>Metazoa</taxon>
        <taxon>Chordata</taxon>
        <taxon>Craniata</taxon>
        <taxon>Vertebrata</taxon>
        <taxon>Euteleostomi</taxon>
        <taxon>Archelosauria</taxon>
        <taxon>Archosauria</taxon>
        <taxon>Dinosauria</taxon>
        <taxon>Saurischia</taxon>
        <taxon>Theropoda</taxon>
        <taxon>Coelurosauria</taxon>
        <taxon>Aves</taxon>
        <taxon>Neognathae</taxon>
        <taxon>Galloanserae</taxon>
        <taxon>Galliformes</taxon>
        <taxon>Phasianidae</taxon>
        <taxon>Perdicinae</taxon>
        <taxon>Alectoris</taxon>
    </lineage>
</organism>
<name>CYB_ALECH</name>
<feature type="chain" id="PRO_0000060563" description="Cytochrome b">
    <location>
        <begin position="1"/>
        <end position="380"/>
    </location>
</feature>
<feature type="transmembrane region" description="Helical" evidence="2">
    <location>
        <begin position="34"/>
        <end position="54"/>
    </location>
</feature>
<feature type="transmembrane region" description="Helical" evidence="2">
    <location>
        <begin position="78"/>
        <end position="99"/>
    </location>
</feature>
<feature type="transmembrane region" description="Helical" evidence="2">
    <location>
        <begin position="114"/>
        <end position="134"/>
    </location>
</feature>
<feature type="transmembrane region" description="Helical" evidence="2">
    <location>
        <begin position="179"/>
        <end position="199"/>
    </location>
</feature>
<feature type="transmembrane region" description="Helical" evidence="2">
    <location>
        <begin position="227"/>
        <end position="247"/>
    </location>
</feature>
<feature type="transmembrane region" description="Helical" evidence="2">
    <location>
        <begin position="289"/>
        <end position="309"/>
    </location>
</feature>
<feature type="transmembrane region" description="Helical" evidence="2">
    <location>
        <begin position="321"/>
        <end position="341"/>
    </location>
</feature>
<feature type="transmembrane region" description="Helical" evidence="2">
    <location>
        <begin position="348"/>
        <end position="368"/>
    </location>
</feature>
<feature type="binding site" description="axial binding residue" evidence="2">
    <location>
        <position position="84"/>
    </location>
    <ligand>
        <name>heme b</name>
        <dbReference type="ChEBI" id="CHEBI:60344"/>
        <label>b562</label>
    </ligand>
    <ligandPart>
        <name>Fe</name>
        <dbReference type="ChEBI" id="CHEBI:18248"/>
    </ligandPart>
</feature>
<feature type="binding site" description="axial binding residue" evidence="2">
    <location>
        <position position="98"/>
    </location>
    <ligand>
        <name>heme b</name>
        <dbReference type="ChEBI" id="CHEBI:60344"/>
        <label>b566</label>
    </ligand>
    <ligandPart>
        <name>Fe</name>
        <dbReference type="ChEBI" id="CHEBI:18248"/>
    </ligandPart>
</feature>
<feature type="binding site" description="axial binding residue" evidence="2">
    <location>
        <position position="183"/>
    </location>
    <ligand>
        <name>heme b</name>
        <dbReference type="ChEBI" id="CHEBI:60344"/>
        <label>b562</label>
    </ligand>
    <ligandPart>
        <name>Fe</name>
        <dbReference type="ChEBI" id="CHEBI:18248"/>
    </ligandPart>
</feature>
<feature type="binding site" description="axial binding residue" evidence="2">
    <location>
        <position position="197"/>
    </location>
    <ligand>
        <name>heme b</name>
        <dbReference type="ChEBI" id="CHEBI:60344"/>
        <label>b566</label>
    </ligand>
    <ligandPart>
        <name>Fe</name>
        <dbReference type="ChEBI" id="CHEBI:18248"/>
    </ligandPart>
</feature>
<feature type="binding site" evidence="2">
    <location>
        <position position="202"/>
    </location>
    <ligand>
        <name>a ubiquinone</name>
        <dbReference type="ChEBI" id="CHEBI:16389"/>
    </ligand>
</feature>
<accession>P48885</accession>